<dbReference type="EMBL" id="AE005674">
    <property type="protein sequence ID" value="AAN42827.1"/>
    <property type="molecule type" value="Genomic_DNA"/>
</dbReference>
<dbReference type="EMBL" id="AE014073">
    <property type="protein sequence ID" value="AAP16713.1"/>
    <property type="molecule type" value="Genomic_DNA"/>
</dbReference>
<dbReference type="RefSeq" id="NP_707120.1">
    <property type="nucleotide sequence ID" value="NC_004337.2"/>
</dbReference>
<dbReference type="RefSeq" id="WP_000804726.1">
    <property type="nucleotide sequence ID" value="NZ_WPGW01000029.1"/>
</dbReference>
<dbReference type="SMR" id="P0A7I3"/>
<dbReference type="STRING" id="198214.SF1214"/>
<dbReference type="PaxDb" id="198214-SF1214"/>
<dbReference type="GeneID" id="1027801"/>
<dbReference type="GeneID" id="93775276"/>
<dbReference type="KEGG" id="sfl:SF1214"/>
<dbReference type="KEGG" id="sfx:S1298"/>
<dbReference type="PATRIC" id="fig|198214.7.peg.1431"/>
<dbReference type="HOGENOM" id="CLU_036856_0_1_6"/>
<dbReference type="Proteomes" id="UP000001006">
    <property type="component" value="Chromosome"/>
</dbReference>
<dbReference type="Proteomes" id="UP000002673">
    <property type="component" value="Chromosome"/>
</dbReference>
<dbReference type="GO" id="GO:0005737">
    <property type="term" value="C:cytoplasm"/>
    <property type="evidence" value="ECO:0007669"/>
    <property type="project" value="UniProtKB-SubCell"/>
</dbReference>
<dbReference type="GO" id="GO:0016149">
    <property type="term" value="F:translation release factor activity, codon specific"/>
    <property type="evidence" value="ECO:0007669"/>
    <property type="project" value="UniProtKB-UniRule"/>
</dbReference>
<dbReference type="FunFam" id="3.30.160.20:FF:000004">
    <property type="entry name" value="Peptide chain release factor 1"/>
    <property type="match status" value="1"/>
</dbReference>
<dbReference type="FunFam" id="3.30.70.1660:FF:000002">
    <property type="entry name" value="Peptide chain release factor 1"/>
    <property type="match status" value="1"/>
</dbReference>
<dbReference type="FunFam" id="3.30.70.1660:FF:000004">
    <property type="entry name" value="Peptide chain release factor 1"/>
    <property type="match status" value="1"/>
</dbReference>
<dbReference type="Gene3D" id="3.30.160.20">
    <property type="match status" value="1"/>
</dbReference>
<dbReference type="Gene3D" id="3.30.70.1660">
    <property type="match status" value="1"/>
</dbReference>
<dbReference type="Gene3D" id="6.10.140.1950">
    <property type="match status" value="1"/>
</dbReference>
<dbReference type="HAMAP" id="MF_00093">
    <property type="entry name" value="Rel_fac_1"/>
    <property type="match status" value="1"/>
</dbReference>
<dbReference type="InterPro" id="IPR005139">
    <property type="entry name" value="PCRF"/>
</dbReference>
<dbReference type="InterPro" id="IPR000352">
    <property type="entry name" value="Pep_chain_release_fac_I"/>
</dbReference>
<dbReference type="InterPro" id="IPR045853">
    <property type="entry name" value="Pep_chain_release_fac_I_sf"/>
</dbReference>
<dbReference type="InterPro" id="IPR050057">
    <property type="entry name" value="Prokaryotic/Mito_RF"/>
</dbReference>
<dbReference type="InterPro" id="IPR004373">
    <property type="entry name" value="RF-1"/>
</dbReference>
<dbReference type="NCBIfam" id="TIGR00019">
    <property type="entry name" value="prfA"/>
    <property type="match status" value="1"/>
</dbReference>
<dbReference type="NCBIfam" id="NF001859">
    <property type="entry name" value="PRK00591.1"/>
    <property type="match status" value="1"/>
</dbReference>
<dbReference type="PANTHER" id="PTHR43804">
    <property type="entry name" value="LD18447P"/>
    <property type="match status" value="1"/>
</dbReference>
<dbReference type="PANTHER" id="PTHR43804:SF7">
    <property type="entry name" value="LD18447P"/>
    <property type="match status" value="1"/>
</dbReference>
<dbReference type="Pfam" id="PF03462">
    <property type="entry name" value="PCRF"/>
    <property type="match status" value="1"/>
</dbReference>
<dbReference type="Pfam" id="PF00472">
    <property type="entry name" value="RF-1"/>
    <property type="match status" value="1"/>
</dbReference>
<dbReference type="SMART" id="SM00937">
    <property type="entry name" value="PCRF"/>
    <property type="match status" value="1"/>
</dbReference>
<dbReference type="SUPFAM" id="SSF75620">
    <property type="entry name" value="Release factor"/>
    <property type="match status" value="1"/>
</dbReference>
<dbReference type="PROSITE" id="PS00745">
    <property type="entry name" value="RF_PROK_I"/>
    <property type="match status" value="1"/>
</dbReference>
<accession>P0A7I3</accession>
<accession>P07011</accession>
<accession>P77340</accession>
<reference key="1">
    <citation type="journal article" date="2002" name="Nucleic Acids Res.">
        <title>Genome sequence of Shigella flexneri 2a: insights into pathogenicity through comparison with genomes of Escherichia coli K12 and O157.</title>
        <authorList>
            <person name="Jin Q."/>
            <person name="Yuan Z."/>
            <person name="Xu J."/>
            <person name="Wang Y."/>
            <person name="Shen Y."/>
            <person name="Lu W."/>
            <person name="Wang J."/>
            <person name="Liu H."/>
            <person name="Yang J."/>
            <person name="Yang F."/>
            <person name="Zhang X."/>
            <person name="Zhang J."/>
            <person name="Yang G."/>
            <person name="Wu H."/>
            <person name="Qu D."/>
            <person name="Dong J."/>
            <person name="Sun L."/>
            <person name="Xue Y."/>
            <person name="Zhao A."/>
            <person name="Gao Y."/>
            <person name="Zhu J."/>
            <person name="Kan B."/>
            <person name="Ding K."/>
            <person name="Chen S."/>
            <person name="Cheng H."/>
            <person name="Yao Z."/>
            <person name="He B."/>
            <person name="Chen R."/>
            <person name="Ma D."/>
            <person name="Qiang B."/>
            <person name="Wen Y."/>
            <person name="Hou Y."/>
            <person name="Yu J."/>
        </authorList>
    </citation>
    <scope>NUCLEOTIDE SEQUENCE [LARGE SCALE GENOMIC DNA]</scope>
    <source>
        <strain>301 / Serotype 2a</strain>
    </source>
</reference>
<reference key="2">
    <citation type="journal article" date="2003" name="Infect. Immun.">
        <title>Complete genome sequence and comparative genomics of Shigella flexneri serotype 2a strain 2457T.</title>
        <authorList>
            <person name="Wei J."/>
            <person name="Goldberg M.B."/>
            <person name="Burland V."/>
            <person name="Venkatesan M.M."/>
            <person name="Deng W."/>
            <person name="Fournier G."/>
            <person name="Mayhew G.F."/>
            <person name="Plunkett G. III"/>
            <person name="Rose D.J."/>
            <person name="Darling A."/>
            <person name="Mau B."/>
            <person name="Perna N.T."/>
            <person name="Payne S.M."/>
            <person name="Runyen-Janecky L.J."/>
            <person name="Zhou S."/>
            <person name="Schwartz D.C."/>
            <person name="Blattner F.R."/>
        </authorList>
    </citation>
    <scope>NUCLEOTIDE SEQUENCE [LARGE SCALE GENOMIC DNA]</scope>
    <source>
        <strain>ATCC 700930 / 2457T / Serotype 2a</strain>
    </source>
</reference>
<proteinExistence type="inferred from homology"/>
<organism>
    <name type="scientific">Shigella flexneri</name>
    <dbReference type="NCBI Taxonomy" id="623"/>
    <lineage>
        <taxon>Bacteria</taxon>
        <taxon>Pseudomonadati</taxon>
        <taxon>Pseudomonadota</taxon>
        <taxon>Gammaproteobacteria</taxon>
        <taxon>Enterobacterales</taxon>
        <taxon>Enterobacteriaceae</taxon>
        <taxon>Shigella</taxon>
    </lineage>
</organism>
<gene>
    <name type="primary">prfA</name>
    <name type="ordered locus">SF1214</name>
    <name type="ordered locus">S1298</name>
</gene>
<keyword id="KW-0963">Cytoplasm</keyword>
<keyword id="KW-0488">Methylation</keyword>
<keyword id="KW-0648">Protein biosynthesis</keyword>
<keyword id="KW-1185">Reference proteome</keyword>
<comment type="function">
    <text evidence="1">Peptide chain release factor 1 directs the termination of translation in response to the peptide chain termination codons UAG and UAA.</text>
</comment>
<comment type="subcellular location">
    <subcellularLocation>
        <location evidence="1">Cytoplasm</location>
    </subcellularLocation>
</comment>
<comment type="PTM">
    <text evidence="1">Methylated by PrmC. Methylation increases the termination efficiency of RF1 (By similarity).</text>
</comment>
<comment type="similarity">
    <text evidence="3">Belongs to the prokaryotic/mitochondrial release factor family.</text>
</comment>
<protein>
    <recommendedName>
        <fullName>Peptide chain release factor 1</fullName>
        <shortName>RF-1</shortName>
    </recommendedName>
</protein>
<name>RF1_SHIFL</name>
<evidence type="ECO:0000250" key="1"/>
<evidence type="ECO:0000256" key="2">
    <source>
        <dbReference type="SAM" id="MobiDB-lite"/>
    </source>
</evidence>
<evidence type="ECO:0000305" key="3"/>
<sequence>MKPSIVAKLEALHERHEEVQALLGDAQTIADQERFRALSREYAQLSDVSRCFTDWQQVQEDIETAQMMLDDPEMREMAQDELREAKEKSEQLEQQLQVLLLPKDPDDERNAFLEVRAGTGGDEAALFAGDLFRMYSRYAEARRWRVEIMSASEGEHGGYKEIIAKISGDGVYGRLKFESGGHRVQRVPATESQGRIHTSACTVAVMPELPDAELPDINPADLRIDTFRSSGAGGQHVNTTDSAIRITHLPTGIVVECQDERSQHKNKAKALSVLGARIHAAEMAKRQQAEASTRRNLLGSGDRSDRNRTYNFPQGRVTDHRINLTLYRLDEVMEGKLDMLIEPIIQEHQADQLAALSEQE</sequence>
<feature type="chain" id="PRO_0000177736" description="Peptide chain release factor 1">
    <location>
        <begin position="1"/>
        <end position="360"/>
    </location>
</feature>
<feature type="region of interest" description="Disordered" evidence="2">
    <location>
        <begin position="284"/>
        <end position="313"/>
    </location>
</feature>
<feature type="modified residue" description="N5-methylglutamine" evidence="1">
    <location>
        <position position="235"/>
    </location>
</feature>